<protein>
    <recommendedName>
        <fullName evidence="1">Ribonuclease 3</fullName>
        <ecNumber evidence="1">3.1.26.3</ecNumber>
    </recommendedName>
    <alternativeName>
        <fullName evidence="1">Ribonuclease III</fullName>
        <shortName evidence="1">RNase III</shortName>
    </alternativeName>
</protein>
<proteinExistence type="inferred from homology"/>
<gene>
    <name evidence="1" type="primary">rnc</name>
    <name type="ordered locus">MXAN_3762</name>
</gene>
<reference key="1">
    <citation type="journal article" date="2006" name="Proc. Natl. Acad. Sci. U.S.A.">
        <title>Evolution of sensory complexity recorded in a myxobacterial genome.</title>
        <authorList>
            <person name="Goldman B.S."/>
            <person name="Nierman W.C."/>
            <person name="Kaiser D."/>
            <person name="Slater S.C."/>
            <person name="Durkin A.S."/>
            <person name="Eisen J.A."/>
            <person name="Ronning C.M."/>
            <person name="Barbazuk W.B."/>
            <person name="Blanchard M."/>
            <person name="Field C."/>
            <person name="Halling C."/>
            <person name="Hinkle G."/>
            <person name="Iartchuk O."/>
            <person name="Kim H.S."/>
            <person name="Mackenzie C."/>
            <person name="Madupu R."/>
            <person name="Miller N."/>
            <person name="Shvartsbeyn A."/>
            <person name="Sullivan S.A."/>
            <person name="Vaudin M."/>
            <person name="Wiegand R."/>
            <person name="Kaplan H.B."/>
        </authorList>
    </citation>
    <scope>NUCLEOTIDE SEQUENCE [LARGE SCALE GENOMIC DNA]</scope>
    <source>
        <strain>DK1622</strain>
    </source>
</reference>
<accession>Q1D5X9</accession>
<organism>
    <name type="scientific">Myxococcus xanthus (strain DK1622)</name>
    <dbReference type="NCBI Taxonomy" id="246197"/>
    <lineage>
        <taxon>Bacteria</taxon>
        <taxon>Pseudomonadati</taxon>
        <taxon>Myxococcota</taxon>
        <taxon>Myxococcia</taxon>
        <taxon>Myxococcales</taxon>
        <taxon>Cystobacterineae</taxon>
        <taxon>Myxococcaceae</taxon>
        <taxon>Myxococcus</taxon>
    </lineage>
</organism>
<feature type="chain" id="PRO_1000094120" description="Ribonuclease 3">
    <location>
        <begin position="1"/>
        <end position="260"/>
    </location>
</feature>
<feature type="domain" description="RNase III" evidence="1">
    <location>
        <begin position="16"/>
        <end position="145"/>
    </location>
</feature>
<feature type="domain" description="DRBM" evidence="1">
    <location>
        <begin position="172"/>
        <end position="241"/>
    </location>
</feature>
<feature type="region of interest" description="Disordered" evidence="2">
    <location>
        <begin position="219"/>
        <end position="260"/>
    </location>
</feature>
<feature type="active site" evidence="1">
    <location>
        <position position="62"/>
    </location>
</feature>
<feature type="active site" evidence="1">
    <location>
        <position position="134"/>
    </location>
</feature>
<feature type="binding site" evidence="1">
    <location>
        <position position="58"/>
    </location>
    <ligand>
        <name>Mg(2+)</name>
        <dbReference type="ChEBI" id="CHEBI:18420"/>
    </ligand>
</feature>
<feature type="binding site" evidence="1">
    <location>
        <position position="131"/>
    </location>
    <ligand>
        <name>Mg(2+)</name>
        <dbReference type="ChEBI" id="CHEBI:18420"/>
    </ligand>
</feature>
<feature type="binding site" evidence="1">
    <location>
        <position position="134"/>
    </location>
    <ligand>
        <name>Mg(2+)</name>
        <dbReference type="ChEBI" id="CHEBI:18420"/>
    </ligand>
</feature>
<comment type="function">
    <text evidence="1">Digests double-stranded RNA. Involved in the processing of primary rRNA transcript to yield the immediate precursors to the large and small rRNAs (23S and 16S). Processes some mRNAs, and tRNAs when they are encoded in the rRNA operon. Processes pre-crRNA and tracrRNA of type II CRISPR loci if present in the organism.</text>
</comment>
<comment type="catalytic activity">
    <reaction evidence="1">
        <text>Endonucleolytic cleavage to 5'-phosphomonoester.</text>
        <dbReference type="EC" id="3.1.26.3"/>
    </reaction>
</comment>
<comment type="cofactor">
    <cofactor evidence="1">
        <name>Mg(2+)</name>
        <dbReference type="ChEBI" id="CHEBI:18420"/>
    </cofactor>
</comment>
<comment type="subunit">
    <text evidence="1">Homodimer.</text>
</comment>
<comment type="subcellular location">
    <subcellularLocation>
        <location evidence="1">Cytoplasm</location>
    </subcellularLocation>
</comment>
<comment type="similarity">
    <text evidence="1">Belongs to the ribonuclease III family.</text>
</comment>
<name>RNC_MYXXD</name>
<evidence type="ECO:0000255" key="1">
    <source>
        <dbReference type="HAMAP-Rule" id="MF_00104"/>
    </source>
</evidence>
<evidence type="ECO:0000256" key="2">
    <source>
        <dbReference type="SAM" id="MobiDB-lite"/>
    </source>
</evidence>
<sequence>MMRLSGADKMSPSERVQLLESRLGLSFSRMETALEALTHKTYVNETRDKELKDNQRLEFLGDSVVNLAVSHRLMARCPGLPEGDLTKMRARVVNEDGLARVARTIPLGDLLLLGRGELMSGGREKNSVLADALEAVFGAVFLTSGLDAAVTLVDRYFADLLDEVSSGQGRLDYKTLLQEMAHERLKLQPRYRVVSESGPEHSKVFEVELMLGETAFARATGRSKKEAEQSAAQATLEKLREDAACPTSPPPGTPRHDTPA</sequence>
<dbReference type="EC" id="3.1.26.3" evidence="1"/>
<dbReference type="EMBL" id="CP000113">
    <property type="protein sequence ID" value="ABF91367.1"/>
    <property type="molecule type" value="Genomic_DNA"/>
</dbReference>
<dbReference type="RefSeq" id="WP_011553775.1">
    <property type="nucleotide sequence ID" value="NC_008095.1"/>
</dbReference>
<dbReference type="SMR" id="Q1D5X9"/>
<dbReference type="STRING" id="246197.MXAN_3762"/>
<dbReference type="EnsemblBacteria" id="ABF91367">
    <property type="protein sequence ID" value="ABF91367"/>
    <property type="gene ID" value="MXAN_3762"/>
</dbReference>
<dbReference type="GeneID" id="41361094"/>
<dbReference type="KEGG" id="mxa:MXAN_3762"/>
<dbReference type="eggNOG" id="COG0571">
    <property type="taxonomic scope" value="Bacteria"/>
</dbReference>
<dbReference type="HOGENOM" id="CLU_000907_1_3_7"/>
<dbReference type="OrthoDB" id="9805026at2"/>
<dbReference type="Proteomes" id="UP000002402">
    <property type="component" value="Chromosome"/>
</dbReference>
<dbReference type="GO" id="GO:0005737">
    <property type="term" value="C:cytoplasm"/>
    <property type="evidence" value="ECO:0007669"/>
    <property type="project" value="UniProtKB-SubCell"/>
</dbReference>
<dbReference type="GO" id="GO:0003725">
    <property type="term" value="F:double-stranded RNA binding"/>
    <property type="evidence" value="ECO:0007669"/>
    <property type="project" value="TreeGrafter"/>
</dbReference>
<dbReference type="GO" id="GO:0046872">
    <property type="term" value="F:metal ion binding"/>
    <property type="evidence" value="ECO:0007669"/>
    <property type="project" value="UniProtKB-KW"/>
</dbReference>
<dbReference type="GO" id="GO:0004525">
    <property type="term" value="F:ribonuclease III activity"/>
    <property type="evidence" value="ECO:0007669"/>
    <property type="project" value="UniProtKB-UniRule"/>
</dbReference>
<dbReference type="GO" id="GO:0019843">
    <property type="term" value="F:rRNA binding"/>
    <property type="evidence" value="ECO:0007669"/>
    <property type="project" value="UniProtKB-KW"/>
</dbReference>
<dbReference type="GO" id="GO:0006397">
    <property type="term" value="P:mRNA processing"/>
    <property type="evidence" value="ECO:0007669"/>
    <property type="project" value="UniProtKB-UniRule"/>
</dbReference>
<dbReference type="GO" id="GO:0010468">
    <property type="term" value="P:regulation of gene expression"/>
    <property type="evidence" value="ECO:0007669"/>
    <property type="project" value="TreeGrafter"/>
</dbReference>
<dbReference type="GO" id="GO:0006364">
    <property type="term" value="P:rRNA processing"/>
    <property type="evidence" value="ECO:0007669"/>
    <property type="project" value="UniProtKB-UniRule"/>
</dbReference>
<dbReference type="GO" id="GO:0008033">
    <property type="term" value="P:tRNA processing"/>
    <property type="evidence" value="ECO:0007669"/>
    <property type="project" value="UniProtKB-KW"/>
</dbReference>
<dbReference type="CDD" id="cd10845">
    <property type="entry name" value="DSRM_RNAse_III_family"/>
    <property type="match status" value="1"/>
</dbReference>
<dbReference type="CDD" id="cd00593">
    <property type="entry name" value="RIBOc"/>
    <property type="match status" value="1"/>
</dbReference>
<dbReference type="FunFam" id="1.10.1520.10:FF:000001">
    <property type="entry name" value="Ribonuclease 3"/>
    <property type="match status" value="1"/>
</dbReference>
<dbReference type="FunFam" id="3.30.160.20:FF:000003">
    <property type="entry name" value="Ribonuclease 3"/>
    <property type="match status" value="1"/>
</dbReference>
<dbReference type="Gene3D" id="3.30.160.20">
    <property type="match status" value="1"/>
</dbReference>
<dbReference type="Gene3D" id="1.10.1520.10">
    <property type="entry name" value="Ribonuclease III domain"/>
    <property type="match status" value="1"/>
</dbReference>
<dbReference type="HAMAP" id="MF_00104">
    <property type="entry name" value="RNase_III"/>
    <property type="match status" value="1"/>
</dbReference>
<dbReference type="InterPro" id="IPR014720">
    <property type="entry name" value="dsRBD_dom"/>
</dbReference>
<dbReference type="InterPro" id="IPR011907">
    <property type="entry name" value="RNase_III"/>
</dbReference>
<dbReference type="InterPro" id="IPR000999">
    <property type="entry name" value="RNase_III_dom"/>
</dbReference>
<dbReference type="InterPro" id="IPR036389">
    <property type="entry name" value="RNase_III_sf"/>
</dbReference>
<dbReference type="NCBIfam" id="TIGR02191">
    <property type="entry name" value="RNaseIII"/>
    <property type="match status" value="1"/>
</dbReference>
<dbReference type="PANTHER" id="PTHR11207:SF0">
    <property type="entry name" value="RIBONUCLEASE 3"/>
    <property type="match status" value="1"/>
</dbReference>
<dbReference type="PANTHER" id="PTHR11207">
    <property type="entry name" value="RIBONUCLEASE III"/>
    <property type="match status" value="1"/>
</dbReference>
<dbReference type="Pfam" id="PF00035">
    <property type="entry name" value="dsrm"/>
    <property type="match status" value="1"/>
</dbReference>
<dbReference type="Pfam" id="PF14622">
    <property type="entry name" value="Ribonucleas_3_3"/>
    <property type="match status" value="1"/>
</dbReference>
<dbReference type="SMART" id="SM00358">
    <property type="entry name" value="DSRM"/>
    <property type="match status" value="1"/>
</dbReference>
<dbReference type="SMART" id="SM00535">
    <property type="entry name" value="RIBOc"/>
    <property type="match status" value="1"/>
</dbReference>
<dbReference type="SUPFAM" id="SSF54768">
    <property type="entry name" value="dsRNA-binding domain-like"/>
    <property type="match status" value="1"/>
</dbReference>
<dbReference type="SUPFAM" id="SSF69065">
    <property type="entry name" value="RNase III domain-like"/>
    <property type="match status" value="1"/>
</dbReference>
<dbReference type="PROSITE" id="PS50137">
    <property type="entry name" value="DS_RBD"/>
    <property type="match status" value="1"/>
</dbReference>
<dbReference type="PROSITE" id="PS00517">
    <property type="entry name" value="RNASE_3_1"/>
    <property type="match status" value="1"/>
</dbReference>
<dbReference type="PROSITE" id="PS50142">
    <property type="entry name" value="RNASE_3_2"/>
    <property type="match status" value="1"/>
</dbReference>
<keyword id="KW-0963">Cytoplasm</keyword>
<keyword id="KW-0255">Endonuclease</keyword>
<keyword id="KW-0378">Hydrolase</keyword>
<keyword id="KW-0460">Magnesium</keyword>
<keyword id="KW-0479">Metal-binding</keyword>
<keyword id="KW-0507">mRNA processing</keyword>
<keyword id="KW-0540">Nuclease</keyword>
<keyword id="KW-1185">Reference proteome</keyword>
<keyword id="KW-0694">RNA-binding</keyword>
<keyword id="KW-0698">rRNA processing</keyword>
<keyword id="KW-0699">rRNA-binding</keyword>
<keyword id="KW-0819">tRNA processing</keyword>